<keyword id="KW-0028">Amino-acid biosynthesis</keyword>
<keyword id="KW-0479">Metal-binding</keyword>
<keyword id="KW-0486">Methionine biosynthesis</keyword>
<keyword id="KW-0489">Methyltransferase</keyword>
<keyword id="KW-1185">Reference proteome</keyword>
<keyword id="KW-0677">Repeat</keyword>
<keyword id="KW-0808">Transferase</keyword>
<keyword id="KW-0862">Zinc</keyword>
<feature type="chain" id="PRO_1000017238" description="5-methyltetrahydropteroyltriglutamate--homocysteine methyltransferase">
    <location>
        <begin position="1"/>
        <end position="753"/>
    </location>
</feature>
<feature type="active site" description="Proton donor" evidence="1">
    <location>
        <position position="694"/>
    </location>
</feature>
<feature type="binding site" evidence="1">
    <location>
        <begin position="17"/>
        <end position="20"/>
    </location>
    <ligand>
        <name>5-methyltetrahydropteroyltri-L-glutamate</name>
        <dbReference type="ChEBI" id="CHEBI:58207"/>
    </ligand>
</feature>
<feature type="binding site" evidence="1">
    <location>
        <position position="117"/>
    </location>
    <ligand>
        <name>5-methyltetrahydropteroyltri-L-glutamate</name>
        <dbReference type="ChEBI" id="CHEBI:58207"/>
    </ligand>
</feature>
<feature type="binding site" evidence="1">
    <location>
        <begin position="431"/>
        <end position="433"/>
    </location>
    <ligand>
        <name>L-homocysteine</name>
        <dbReference type="ChEBI" id="CHEBI:58199"/>
    </ligand>
</feature>
<feature type="binding site" evidence="1">
    <location>
        <begin position="431"/>
        <end position="433"/>
    </location>
    <ligand>
        <name>L-methionine</name>
        <dbReference type="ChEBI" id="CHEBI:57844"/>
    </ligand>
</feature>
<feature type="binding site" evidence="1">
    <location>
        <position position="484"/>
    </location>
    <ligand>
        <name>L-homocysteine</name>
        <dbReference type="ChEBI" id="CHEBI:58199"/>
    </ligand>
</feature>
<feature type="binding site" evidence="1">
    <location>
        <position position="484"/>
    </location>
    <ligand>
        <name>L-methionine</name>
        <dbReference type="ChEBI" id="CHEBI:57844"/>
    </ligand>
</feature>
<feature type="binding site" evidence="1">
    <location>
        <begin position="515"/>
        <end position="516"/>
    </location>
    <ligand>
        <name>5-methyltetrahydropteroyltri-L-glutamate</name>
        <dbReference type="ChEBI" id="CHEBI:58207"/>
    </ligand>
</feature>
<feature type="binding site" evidence="1">
    <location>
        <position position="561"/>
    </location>
    <ligand>
        <name>5-methyltetrahydropteroyltri-L-glutamate</name>
        <dbReference type="ChEBI" id="CHEBI:58207"/>
    </ligand>
</feature>
<feature type="binding site" evidence="1">
    <location>
        <position position="599"/>
    </location>
    <ligand>
        <name>L-homocysteine</name>
        <dbReference type="ChEBI" id="CHEBI:58199"/>
    </ligand>
</feature>
<feature type="binding site" evidence="1">
    <location>
        <position position="599"/>
    </location>
    <ligand>
        <name>L-methionine</name>
        <dbReference type="ChEBI" id="CHEBI:57844"/>
    </ligand>
</feature>
<feature type="binding site" evidence="1">
    <location>
        <position position="605"/>
    </location>
    <ligand>
        <name>5-methyltetrahydropteroyltri-L-glutamate</name>
        <dbReference type="ChEBI" id="CHEBI:58207"/>
    </ligand>
</feature>
<feature type="binding site" evidence="1">
    <location>
        <position position="641"/>
    </location>
    <ligand>
        <name>Zn(2+)</name>
        <dbReference type="ChEBI" id="CHEBI:29105"/>
        <note>catalytic</note>
    </ligand>
</feature>
<feature type="binding site" evidence="1">
    <location>
        <position position="643"/>
    </location>
    <ligand>
        <name>Zn(2+)</name>
        <dbReference type="ChEBI" id="CHEBI:29105"/>
        <note>catalytic</note>
    </ligand>
</feature>
<feature type="binding site" evidence="1">
    <location>
        <position position="665"/>
    </location>
    <ligand>
        <name>Zn(2+)</name>
        <dbReference type="ChEBI" id="CHEBI:29105"/>
        <note>catalytic</note>
    </ligand>
</feature>
<feature type="binding site" evidence="1">
    <location>
        <position position="726"/>
    </location>
    <ligand>
        <name>Zn(2+)</name>
        <dbReference type="ChEBI" id="CHEBI:29105"/>
        <note>catalytic</note>
    </ligand>
</feature>
<reference key="1">
    <citation type="submission" date="2007-08" db="EMBL/GenBank/DDBJ databases">
        <authorList>
            <consortium name="The Citrobacter koseri Genome Sequencing Project"/>
            <person name="McClelland M."/>
            <person name="Sanderson E.K."/>
            <person name="Porwollik S."/>
            <person name="Spieth J."/>
            <person name="Clifton W.S."/>
            <person name="Latreille P."/>
            <person name="Courtney L."/>
            <person name="Wang C."/>
            <person name="Pepin K."/>
            <person name="Bhonagiri V."/>
            <person name="Nash W."/>
            <person name="Johnson M."/>
            <person name="Thiruvilangam P."/>
            <person name="Wilson R."/>
        </authorList>
    </citation>
    <scope>NUCLEOTIDE SEQUENCE [LARGE SCALE GENOMIC DNA]</scope>
    <source>
        <strain>ATCC BAA-895 / CDC 4225-83 / SGSC4696</strain>
    </source>
</reference>
<protein>
    <recommendedName>
        <fullName evidence="1">5-methyltetrahydropteroyltriglutamate--homocysteine methyltransferase</fullName>
        <ecNumber evidence="1">2.1.1.14</ecNumber>
    </recommendedName>
    <alternativeName>
        <fullName evidence="1">Cobalamin-independent methionine synthase</fullName>
    </alternativeName>
    <alternativeName>
        <fullName evidence="1">Methionine synthase, vitamin-B12 independent isozyme</fullName>
    </alternativeName>
</protein>
<evidence type="ECO:0000255" key="1">
    <source>
        <dbReference type="HAMAP-Rule" id="MF_00172"/>
    </source>
</evidence>
<sequence>MTIRNHTLGFPRVGLRRELKKAQESYWAGNATREDLLATGRELRARHWDQQKQAGIDLLPVGDFAWYDHVLTTSLLLGNVPARHQNSDGSVDIDTLFRIGRGRAPTGEPAAAAEMTKWFNTNYHYMVPEFVKGQQFKLTWTQLLDEVDEALALGHKVKPVLLGPVTYLWLGKVKGESFDRLSLLNDILPVYKQVLTELAKRGVEWVQIDEPALVLELPQEWLDAYKPAYDALQGQVKLLLTTYFEGVTPNLDTIAALPVQGLHVDLVHGKDDVAELHKRLPSDWLLSAGLVNGRNVWRADLTEKYAQIKDIVGKRDLWVASSCSLLHSPIDLSVETRLDAEVKSWFAFALQKCGELALLRDALNSGDTAKLEAWSAPIQARRHSTRVHNAAVEKRLAAITAQDSQRASPYAARAQAQRNRFNLPSWPTTTIGSFPQTTEIRGLRLDFKKGNLDANHYRTGIAEHIKQAIVEQERLGLDVLVHGEAERNDMVEYFGEHLDGFVFTQNGWVQSYGSRCVKPPVVIGDVSRPEPITVEWAKYAQSLTDKPVKGMLTGPVTILCWSFPREDVSRETIAKQIALALRDEVADLEAAGIGIIQIDEPALREGLPLRRSDWDAYLQWGVEAFRINAAVAKDDTQIHTHMCYCEFNDIMDSIAALDADVITIETSRSDMELLESFEEFEYPNEIGPGVYDIHSPNVPSVEWIEALLNKAAQRIPAERLWVNPDCGLKTRGWPETRAALANMVKAAQNLRQA</sequence>
<dbReference type="EC" id="2.1.1.14" evidence="1"/>
<dbReference type="EMBL" id="CP000822">
    <property type="protein sequence ID" value="ABV11340.1"/>
    <property type="molecule type" value="Genomic_DNA"/>
</dbReference>
<dbReference type="RefSeq" id="WP_012131174.1">
    <property type="nucleotide sequence ID" value="NC_009792.1"/>
</dbReference>
<dbReference type="SMR" id="A8ACX7"/>
<dbReference type="STRING" id="290338.CKO_00171"/>
<dbReference type="GeneID" id="45134463"/>
<dbReference type="KEGG" id="cko:CKO_00171"/>
<dbReference type="HOGENOM" id="CLU_013175_0_0_6"/>
<dbReference type="OrthoDB" id="244285at2"/>
<dbReference type="UniPathway" id="UPA00051">
    <property type="reaction ID" value="UER00082"/>
</dbReference>
<dbReference type="Proteomes" id="UP000008148">
    <property type="component" value="Chromosome"/>
</dbReference>
<dbReference type="GO" id="GO:0003871">
    <property type="term" value="F:5-methyltetrahydropteroyltriglutamate-homocysteine S-methyltransferase activity"/>
    <property type="evidence" value="ECO:0007669"/>
    <property type="project" value="UniProtKB-UniRule"/>
</dbReference>
<dbReference type="GO" id="GO:0008270">
    <property type="term" value="F:zinc ion binding"/>
    <property type="evidence" value="ECO:0007669"/>
    <property type="project" value="InterPro"/>
</dbReference>
<dbReference type="GO" id="GO:0009086">
    <property type="term" value="P:methionine biosynthetic process"/>
    <property type="evidence" value="ECO:0007669"/>
    <property type="project" value="UniProtKB-UniRule"/>
</dbReference>
<dbReference type="GO" id="GO:0032259">
    <property type="term" value="P:methylation"/>
    <property type="evidence" value="ECO:0007669"/>
    <property type="project" value="UniProtKB-KW"/>
</dbReference>
<dbReference type="CDD" id="cd03311">
    <property type="entry name" value="CIMS_C_terminal_like"/>
    <property type="match status" value="1"/>
</dbReference>
<dbReference type="CDD" id="cd03312">
    <property type="entry name" value="CIMS_N_terminal_like"/>
    <property type="match status" value="1"/>
</dbReference>
<dbReference type="FunFam" id="3.20.20.210:FF:000002">
    <property type="entry name" value="5-methyltetrahydropteroyltriglutamate--homocysteine methyltransferase"/>
    <property type="match status" value="1"/>
</dbReference>
<dbReference type="FunFam" id="3.20.20.210:FF:000003">
    <property type="entry name" value="5-methyltetrahydropteroyltriglutamate--homocysteine methyltransferase"/>
    <property type="match status" value="1"/>
</dbReference>
<dbReference type="Gene3D" id="3.20.20.210">
    <property type="match status" value="2"/>
</dbReference>
<dbReference type="HAMAP" id="MF_00172">
    <property type="entry name" value="Meth_synth"/>
    <property type="match status" value="1"/>
</dbReference>
<dbReference type="InterPro" id="IPR013215">
    <property type="entry name" value="Cbl-indep_Met_Synth_N"/>
</dbReference>
<dbReference type="InterPro" id="IPR006276">
    <property type="entry name" value="Cobalamin-indep_Met_synthase"/>
</dbReference>
<dbReference type="InterPro" id="IPR002629">
    <property type="entry name" value="Met_Synth_C/arc"/>
</dbReference>
<dbReference type="InterPro" id="IPR038071">
    <property type="entry name" value="UROD/MetE-like_sf"/>
</dbReference>
<dbReference type="NCBIfam" id="TIGR01371">
    <property type="entry name" value="met_syn_B12ind"/>
    <property type="match status" value="1"/>
</dbReference>
<dbReference type="NCBIfam" id="NF003556">
    <property type="entry name" value="PRK05222.1"/>
    <property type="match status" value="1"/>
</dbReference>
<dbReference type="PANTHER" id="PTHR30519">
    <property type="entry name" value="5-METHYLTETRAHYDROPTEROYLTRIGLUTAMATE--HOMOCYSTEINE METHYLTRANSFERASE"/>
    <property type="match status" value="1"/>
</dbReference>
<dbReference type="Pfam" id="PF08267">
    <property type="entry name" value="Meth_synt_1"/>
    <property type="match status" value="1"/>
</dbReference>
<dbReference type="Pfam" id="PF01717">
    <property type="entry name" value="Meth_synt_2"/>
    <property type="match status" value="1"/>
</dbReference>
<dbReference type="PIRSF" id="PIRSF000382">
    <property type="entry name" value="MeTrfase_B12_ind"/>
    <property type="match status" value="1"/>
</dbReference>
<dbReference type="SUPFAM" id="SSF51726">
    <property type="entry name" value="UROD/MetE-like"/>
    <property type="match status" value="2"/>
</dbReference>
<comment type="function">
    <text evidence="1">Catalyzes the transfer of a methyl group from 5-methyltetrahydrofolate to homocysteine resulting in methionine formation.</text>
</comment>
<comment type="catalytic activity">
    <reaction evidence="1">
        <text>5-methyltetrahydropteroyltri-L-glutamate + L-homocysteine = tetrahydropteroyltri-L-glutamate + L-methionine</text>
        <dbReference type="Rhea" id="RHEA:21196"/>
        <dbReference type="ChEBI" id="CHEBI:57844"/>
        <dbReference type="ChEBI" id="CHEBI:58140"/>
        <dbReference type="ChEBI" id="CHEBI:58199"/>
        <dbReference type="ChEBI" id="CHEBI:58207"/>
        <dbReference type="EC" id="2.1.1.14"/>
    </reaction>
</comment>
<comment type="cofactor">
    <cofactor evidence="1">
        <name>Zn(2+)</name>
        <dbReference type="ChEBI" id="CHEBI:29105"/>
    </cofactor>
    <text evidence="1">Binds 1 zinc ion per subunit.</text>
</comment>
<comment type="pathway">
    <text evidence="1">Amino-acid biosynthesis; L-methionine biosynthesis via de novo pathway; L-methionine from L-homocysteine (MetE route): step 1/1.</text>
</comment>
<comment type="similarity">
    <text evidence="1">Belongs to the vitamin-B12 independent methionine synthase family.</text>
</comment>
<proteinExistence type="inferred from homology"/>
<organism>
    <name type="scientific">Citrobacter koseri (strain ATCC BAA-895 / CDC 4225-83 / SGSC4696)</name>
    <dbReference type="NCBI Taxonomy" id="290338"/>
    <lineage>
        <taxon>Bacteria</taxon>
        <taxon>Pseudomonadati</taxon>
        <taxon>Pseudomonadota</taxon>
        <taxon>Gammaproteobacteria</taxon>
        <taxon>Enterobacterales</taxon>
        <taxon>Enterobacteriaceae</taxon>
        <taxon>Citrobacter</taxon>
    </lineage>
</organism>
<accession>A8ACX7</accession>
<gene>
    <name evidence="1" type="primary">metE</name>
    <name type="ordered locus">CKO_00171</name>
</gene>
<name>METE_CITK8</name>